<gene>
    <name evidence="1" type="primary">wzyE</name>
    <name type="ordered locus">EFER_3710</name>
</gene>
<comment type="function">
    <text evidence="1">Probably involved in the polymerization of enterobacterial common antigen (ECA) trisaccharide repeat units.</text>
</comment>
<comment type="pathway">
    <text evidence="1">Bacterial outer membrane biogenesis; enterobacterial common antigen biosynthesis.</text>
</comment>
<comment type="subunit">
    <text evidence="1">Probably part of a complex composed of WzxE, WzyE and WzzE.</text>
</comment>
<comment type="subcellular location">
    <subcellularLocation>
        <location evidence="1">Cell inner membrane</location>
        <topology evidence="1">Multi-pass membrane protein</topology>
    </subcellularLocation>
</comment>
<comment type="similarity">
    <text evidence="1">Belongs to the WzyE family.</text>
</comment>
<keyword id="KW-0997">Cell inner membrane</keyword>
<keyword id="KW-1003">Cell membrane</keyword>
<keyword id="KW-0472">Membrane</keyword>
<keyword id="KW-0812">Transmembrane</keyword>
<keyword id="KW-1133">Transmembrane helix</keyword>
<sequence>MSLLQFSGLFVVWLLCTLFIATLTWFEFRRVRFNFNVFFSLLFLLTFFFGFPLTSVLVFRFDVGVAPPEILLQALLSAGCFYAVYYVTYKTRLRKRTTDVPRRPLFTMNRVETNLTWVILMGIALVSVGIFFMHNGFLLFRLNSYSQIFSSEVSGVALKRFFYFFIPAMLVVYFLRQDSKAWLFFLVSTVAFGLLTYMIVGGTRANIIIAFAIFLFIGIIRGWISLWMLAAAGVLGIVGMFWLALKRYGMNVSGDEAFYTFLYLTRDTFSPWENLALLLQNYDNIDFQGLAPIVRDFYVFIPSWLWPGRPSMVLNSANYFTWEVLNNHSGLAISPTLIGSLVVMGGALFIPLGAIVVGLIIKWFDWLYELGNRETNRYKAAILHSFCFGAIFNMIVLAREGLDSFVSRVVFFIVVFGACLMIAKLLYWLFESAGLIHKRTKSSLRTQVEG</sequence>
<dbReference type="EMBL" id="CU928158">
    <property type="protein sequence ID" value="CAQ91170.1"/>
    <property type="molecule type" value="Genomic_DNA"/>
</dbReference>
<dbReference type="RefSeq" id="WP_000055118.1">
    <property type="nucleotide sequence ID" value="NC_011740.1"/>
</dbReference>
<dbReference type="GeneID" id="75059686"/>
<dbReference type="KEGG" id="efe:EFER_3710"/>
<dbReference type="HOGENOM" id="CLU_049711_0_0_6"/>
<dbReference type="OrthoDB" id="6415259at2"/>
<dbReference type="UniPathway" id="UPA00566"/>
<dbReference type="Proteomes" id="UP000000745">
    <property type="component" value="Chromosome"/>
</dbReference>
<dbReference type="GO" id="GO:0005886">
    <property type="term" value="C:plasma membrane"/>
    <property type="evidence" value="ECO:0007669"/>
    <property type="project" value="UniProtKB-SubCell"/>
</dbReference>
<dbReference type="GO" id="GO:0009246">
    <property type="term" value="P:enterobacterial common antigen biosynthetic process"/>
    <property type="evidence" value="ECO:0007669"/>
    <property type="project" value="UniProtKB-UniRule"/>
</dbReference>
<dbReference type="HAMAP" id="MF_01003">
    <property type="entry name" value="WzyE"/>
    <property type="match status" value="1"/>
</dbReference>
<dbReference type="InterPro" id="IPR010691">
    <property type="entry name" value="WzyE"/>
</dbReference>
<dbReference type="NCBIfam" id="NF002820">
    <property type="entry name" value="PRK02975.1"/>
    <property type="match status" value="1"/>
</dbReference>
<dbReference type="Pfam" id="PF06899">
    <property type="entry name" value="WzyE"/>
    <property type="match status" value="1"/>
</dbReference>
<name>WZYE_ESCF3</name>
<evidence type="ECO:0000255" key="1">
    <source>
        <dbReference type="HAMAP-Rule" id="MF_01003"/>
    </source>
</evidence>
<accession>B7LU62</accession>
<reference key="1">
    <citation type="journal article" date="2009" name="PLoS Genet.">
        <title>Organised genome dynamics in the Escherichia coli species results in highly diverse adaptive paths.</title>
        <authorList>
            <person name="Touchon M."/>
            <person name="Hoede C."/>
            <person name="Tenaillon O."/>
            <person name="Barbe V."/>
            <person name="Baeriswyl S."/>
            <person name="Bidet P."/>
            <person name="Bingen E."/>
            <person name="Bonacorsi S."/>
            <person name="Bouchier C."/>
            <person name="Bouvet O."/>
            <person name="Calteau A."/>
            <person name="Chiapello H."/>
            <person name="Clermont O."/>
            <person name="Cruveiller S."/>
            <person name="Danchin A."/>
            <person name="Diard M."/>
            <person name="Dossat C."/>
            <person name="Karoui M.E."/>
            <person name="Frapy E."/>
            <person name="Garry L."/>
            <person name="Ghigo J.M."/>
            <person name="Gilles A.M."/>
            <person name="Johnson J."/>
            <person name="Le Bouguenec C."/>
            <person name="Lescat M."/>
            <person name="Mangenot S."/>
            <person name="Martinez-Jehanne V."/>
            <person name="Matic I."/>
            <person name="Nassif X."/>
            <person name="Oztas S."/>
            <person name="Petit M.A."/>
            <person name="Pichon C."/>
            <person name="Rouy Z."/>
            <person name="Ruf C.S."/>
            <person name="Schneider D."/>
            <person name="Tourret J."/>
            <person name="Vacherie B."/>
            <person name="Vallenet D."/>
            <person name="Medigue C."/>
            <person name="Rocha E.P.C."/>
            <person name="Denamur E."/>
        </authorList>
    </citation>
    <scope>NUCLEOTIDE SEQUENCE [LARGE SCALE GENOMIC DNA]</scope>
    <source>
        <strain>ATCC 35469 / DSM 13698 / BCRC 15582 / CCUG 18766 / IAM 14443 / JCM 21226 / LMG 7866 / NBRC 102419 / NCTC 12128 / CDC 0568-73</strain>
    </source>
</reference>
<organism>
    <name type="scientific">Escherichia fergusonii (strain ATCC 35469 / DSM 13698 / CCUG 18766 / IAM 14443 / JCM 21226 / LMG 7866 / NBRC 102419 / NCTC 12128 / CDC 0568-73)</name>
    <dbReference type="NCBI Taxonomy" id="585054"/>
    <lineage>
        <taxon>Bacteria</taxon>
        <taxon>Pseudomonadati</taxon>
        <taxon>Pseudomonadota</taxon>
        <taxon>Gammaproteobacteria</taxon>
        <taxon>Enterobacterales</taxon>
        <taxon>Enterobacteriaceae</taxon>
        <taxon>Escherichia</taxon>
    </lineage>
</organism>
<feature type="chain" id="PRO_1000200211" description="Probable ECA polymerase">
    <location>
        <begin position="1"/>
        <end position="450"/>
    </location>
</feature>
<feature type="transmembrane region" description="Helical" evidence="1">
    <location>
        <begin position="6"/>
        <end position="26"/>
    </location>
</feature>
<feature type="transmembrane region" description="Helical" evidence="1">
    <location>
        <begin position="37"/>
        <end position="57"/>
    </location>
</feature>
<feature type="transmembrane region" description="Helical" evidence="1">
    <location>
        <begin position="63"/>
        <end position="83"/>
    </location>
</feature>
<feature type="transmembrane region" description="Helical" evidence="1">
    <location>
        <begin position="118"/>
        <end position="138"/>
    </location>
</feature>
<feature type="transmembrane region" description="Helical" evidence="1">
    <location>
        <begin position="155"/>
        <end position="175"/>
    </location>
</feature>
<feature type="transmembrane region" description="Helical" evidence="1">
    <location>
        <begin position="181"/>
        <end position="201"/>
    </location>
</feature>
<feature type="transmembrane region" description="Helical" evidence="1">
    <location>
        <begin position="207"/>
        <end position="227"/>
    </location>
</feature>
<feature type="transmembrane region" description="Helical" evidence="1">
    <location>
        <begin position="228"/>
        <end position="248"/>
    </location>
</feature>
<feature type="transmembrane region" description="Helical" evidence="1">
    <location>
        <begin position="341"/>
        <end position="361"/>
    </location>
</feature>
<feature type="transmembrane region" description="Helical" evidence="1">
    <location>
        <begin position="378"/>
        <end position="398"/>
    </location>
</feature>
<feature type="transmembrane region" description="Helical" evidence="1">
    <location>
        <begin position="410"/>
        <end position="430"/>
    </location>
</feature>
<proteinExistence type="inferred from homology"/>
<protein>
    <recommendedName>
        <fullName evidence="1">Probable ECA polymerase</fullName>
    </recommendedName>
</protein>